<name>PLY18_SOLLC</name>
<organism>
    <name type="scientific">Solanum lycopersicum</name>
    <name type="common">Tomato</name>
    <name type="synonym">Lycopersicon esculentum</name>
    <dbReference type="NCBI Taxonomy" id="4081"/>
    <lineage>
        <taxon>Eukaryota</taxon>
        <taxon>Viridiplantae</taxon>
        <taxon>Streptophyta</taxon>
        <taxon>Embryophyta</taxon>
        <taxon>Tracheophyta</taxon>
        <taxon>Spermatophyta</taxon>
        <taxon>Magnoliopsida</taxon>
        <taxon>eudicotyledons</taxon>
        <taxon>Gunneridae</taxon>
        <taxon>Pentapetalae</taxon>
        <taxon>asterids</taxon>
        <taxon>lamiids</taxon>
        <taxon>Solanales</taxon>
        <taxon>Solanaceae</taxon>
        <taxon>Solanoideae</taxon>
        <taxon>Solaneae</taxon>
        <taxon>Solanum</taxon>
        <taxon>Solanum subgen. Lycopersicon</taxon>
    </lineage>
</organism>
<comment type="function">
    <text evidence="7">May have a role in the development of the transmitting tissue of the style and/or in the events related to pollination such as some aspect in the facilitation of compatible pollen tube growth.</text>
</comment>
<comment type="catalytic activity">
    <reaction evidence="2">
        <text>Eliminative cleavage of (1-&gt;4)-alpha-D-galacturonan to give oligosaccharides with 4-deoxy-alpha-D-galact-4-enuronosyl groups at their non-reducing ends.</text>
        <dbReference type="EC" id="4.2.2.2"/>
    </reaction>
</comment>
<comment type="cofactor">
    <cofactor evidence="2">
        <name>Ca(2+)</name>
        <dbReference type="ChEBI" id="CHEBI:29108"/>
    </cofactor>
    <text evidence="2">Binds 1 Ca(2+) ion. Required for its activity.</text>
</comment>
<comment type="pathway">
    <text>Glycan metabolism; pectin degradation; 2-dehydro-3-deoxy-D-gluconate from pectin: step 2/5.</text>
</comment>
<comment type="subcellular location">
    <subcellularLocation>
        <location evidence="9">Secreted</location>
    </subcellularLocation>
</comment>
<comment type="tissue specificity">
    <text evidence="7">Predominantly found in the pistil where it is found in the outer five layers of the strands of transmitting tissue within the upper two-thirds of the style. Found at much lower levels in the anthers and vegetative organs.</text>
</comment>
<comment type="developmental stage">
    <text evidence="7">Maximum levels are found during anthesis.</text>
</comment>
<comment type="similarity">
    <text evidence="9">Belongs to the polysaccharide lyase 1 family.</text>
</comment>
<reference key="1">
    <citation type="journal article" date="1990" name="Mol. Gen. Genet.">
        <title>Regulation of a stylar transmitting tissue-specific gene in wild-type and transgenic tomato and tobacco.</title>
        <authorList>
            <person name="Budelier K.A."/>
            <person name="Smith A.G."/>
            <person name="Gasser C.S."/>
        </authorList>
    </citation>
    <scope>NUCLEOTIDE SEQUENCE [MRNA]</scope>
    <scope>FUNCTION</scope>
    <scope>TISSUE SPECIFICITY</scope>
    <scope>DEVELOPMENTAL STAGE</scope>
    <source>
        <strain>cv. VF36</strain>
        <tissue>Pistil</tissue>
    </source>
</reference>
<evidence type="ECO:0000250" key="1">
    <source>
        <dbReference type="UniProtKB" id="P11073"/>
    </source>
</evidence>
<evidence type="ECO:0000250" key="2">
    <source>
        <dbReference type="UniProtKB" id="P18632"/>
    </source>
</evidence>
<evidence type="ECO:0000250" key="3">
    <source>
        <dbReference type="UniProtKB" id="P39116"/>
    </source>
</evidence>
<evidence type="ECO:0000250" key="4">
    <source>
        <dbReference type="UniProtKB" id="P81294"/>
    </source>
</evidence>
<evidence type="ECO:0000255" key="5"/>
<evidence type="ECO:0000255" key="6">
    <source>
        <dbReference type="PROSITE-ProRule" id="PRU00498"/>
    </source>
</evidence>
<evidence type="ECO:0000269" key="7">
    <source>
    </source>
</evidence>
<evidence type="ECO:0000303" key="8">
    <source>
    </source>
</evidence>
<evidence type="ECO:0000305" key="9"/>
<keyword id="KW-0106">Calcium</keyword>
<keyword id="KW-1015">Disulfide bond</keyword>
<keyword id="KW-0325">Glycoprotein</keyword>
<keyword id="KW-0456">Lyase</keyword>
<keyword id="KW-0479">Metal-binding</keyword>
<keyword id="KW-1185">Reference proteome</keyword>
<keyword id="KW-0964">Secreted</keyword>
<keyword id="KW-0732">Signal</keyword>
<gene>
    <name evidence="9" type="primary">P18</name>
    <name evidence="8" type="synonym">9612</name>
    <name evidence="9" type="ordered locus">Solyc02g093580</name>
</gene>
<sequence>MSTLFFTFSLLLLAPLLVISSIQDPELVVQDVHRSINASLTRRNLGYLSCGSGNPIDRLLAMQPQLGKKSPAFSYCAIGFGKNAIGGKNGRIYVVTDSGNDDPVNPKPGTLRHAVIQDEPLWIIFKRDMVIQLKQELVMNSYKTIDGRGASVHISGGPCITIHHTSNIIIHGINIHDCKQSGNGNIRDSPNHSGWWDVSDGDGISIFGGKNIWVDHCSLSNCHDGLIDAIHGSTAITISNNYFTHHDKVMLLGHSDSFTQDKGMQVTVAFNHFGEGLVQRMPRCRHGYFHVVNNDYTHWEMYAIGGSAAPTINSQGNRFLAPNEKYRKEVTKHEDAPESQWRSWNWRSEGDLMLNGAYFRQTGAGASSSSTYARASSLSARPSSLVGSITTNAGPVNCKKGSRC</sequence>
<proteinExistence type="evidence at transcript level"/>
<accession>P24396</accession>
<dbReference type="EC" id="4.2.2.2" evidence="2"/>
<dbReference type="EMBL" id="X55193">
    <property type="protein sequence ID" value="CAA38979.1"/>
    <property type="molecule type" value="mRNA"/>
</dbReference>
<dbReference type="PIR" id="S12209">
    <property type="entry name" value="S12209"/>
</dbReference>
<dbReference type="RefSeq" id="NP_001234029.2">
    <property type="nucleotide sequence ID" value="NM_001247100.2"/>
</dbReference>
<dbReference type="SMR" id="P24396"/>
<dbReference type="CAZy" id="PL1">
    <property type="family name" value="Polysaccharide Lyase Family 1"/>
</dbReference>
<dbReference type="GlyCosmos" id="P24396">
    <property type="glycosylation" value="2 sites, No reported glycans"/>
</dbReference>
<dbReference type="PaxDb" id="4081-Solyc02g093580.2.1"/>
<dbReference type="GeneID" id="778293"/>
<dbReference type="KEGG" id="sly:778293"/>
<dbReference type="eggNOG" id="ENOG502QVCJ">
    <property type="taxonomic scope" value="Eukaryota"/>
</dbReference>
<dbReference type="InParanoid" id="P24396"/>
<dbReference type="OrthoDB" id="1637350at2759"/>
<dbReference type="UniPathway" id="UPA00545">
    <property type="reaction ID" value="UER00824"/>
</dbReference>
<dbReference type="Proteomes" id="UP000004994">
    <property type="component" value="Unplaced"/>
</dbReference>
<dbReference type="ExpressionAtlas" id="P24396">
    <property type="expression patterns" value="baseline and differential"/>
</dbReference>
<dbReference type="GO" id="GO:0005576">
    <property type="term" value="C:extracellular region"/>
    <property type="evidence" value="ECO:0007669"/>
    <property type="project" value="UniProtKB-SubCell"/>
</dbReference>
<dbReference type="GO" id="GO:0046872">
    <property type="term" value="F:metal ion binding"/>
    <property type="evidence" value="ECO:0007669"/>
    <property type="project" value="UniProtKB-KW"/>
</dbReference>
<dbReference type="GO" id="GO:0030570">
    <property type="term" value="F:pectate lyase activity"/>
    <property type="evidence" value="ECO:0007669"/>
    <property type="project" value="UniProtKB-EC"/>
</dbReference>
<dbReference type="GO" id="GO:0045490">
    <property type="term" value="P:pectin catabolic process"/>
    <property type="evidence" value="ECO:0007669"/>
    <property type="project" value="UniProtKB-UniPathway"/>
</dbReference>
<dbReference type="FunFam" id="2.160.20.10:FF:000009">
    <property type="entry name" value="Pectate lyase"/>
    <property type="match status" value="1"/>
</dbReference>
<dbReference type="Gene3D" id="2.160.20.10">
    <property type="entry name" value="Single-stranded right-handed beta-helix, Pectin lyase-like"/>
    <property type="match status" value="1"/>
</dbReference>
<dbReference type="InterPro" id="IPR018082">
    <property type="entry name" value="AmbAllergen"/>
</dbReference>
<dbReference type="InterPro" id="IPR002022">
    <property type="entry name" value="Pec_lyase"/>
</dbReference>
<dbReference type="InterPro" id="IPR012334">
    <property type="entry name" value="Pectin_lyas_fold"/>
</dbReference>
<dbReference type="InterPro" id="IPR011050">
    <property type="entry name" value="Pectin_lyase_fold/virulence"/>
</dbReference>
<dbReference type="InterPro" id="IPR045032">
    <property type="entry name" value="PEL"/>
</dbReference>
<dbReference type="PANTHER" id="PTHR31683:SF29">
    <property type="entry name" value="PECTATE LYASE 11-RELATED"/>
    <property type="match status" value="1"/>
</dbReference>
<dbReference type="PANTHER" id="PTHR31683">
    <property type="entry name" value="PECTATE LYASE 18-RELATED"/>
    <property type="match status" value="1"/>
</dbReference>
<dbReference type="Pfam" id="PF00544">
    <property type="entry name" value="Pectate_lyase_4"/>
    <property type="match status" value="1"/>
</dbReference>
<dbReference type="PRINTS" id="PR00807">
    <property type="entry name" value="AMBALLERGEN"/>
</dbReference>
<dbReference type="SMART" id="SM00656">
    <property type="entry name" value="Amb_all"/>
    <property type="match status" value="1"/>
</dbReference>
<dbReference type="SUPFAM" id="SSF51126">
    <property type="entry name" value="Pectin lyase-like"/>
    <property type="match status" value="1"/>
</dbReference>
<feature type="signal peptide" evidence="5">
    <location>
        <begin position="1"/>
        <end position="20"/>
    </location>
</feature>
<feature type="chain" id="PRO_0000024889" description="Probable pectate lyase 18">
    <location>
        <begin position="21"/>
        <end position="404"/>
    </location>
</feature>
<feature type="active site" evidence="5">
    <location>
        <position position="280"/>
    </location>
</feature>
<feature type="binding site" evidence="1">
    <location>
        <position position="200"/>
    </location>
    <ligand>
        <name>Ca(2+)</name>
        <dbReference type="ChEBI" id="CHEBI:29108"/>
    </ligand>
</feature>
<feature type="binding site" evidence="1">
    <location>
        <position position="202"/>
    </location>
    <ligand>
        <name>Ca(2+)</name>
        <dbReference type="ChEBI" id="CHEBI:29108"/>
    </ligand>
</feature>
<feature type="binding site" evidence="3">
    <location>
        <position position="224"/>
    </location>
    <ligand>
        <name>Ca(2+)</name>
        <dbReference type="ChEBI" id="CHEBI:29108"/>
    </ligand>
</feature>
<feature type="binding site" evidence="3">
    <location>
        <position position="228"/>
    </location>
    <ligand>
        <name>Ca(2+)</name>
        <dbReference type="ChEBI" id="CHEBI:29108"/>
    </ligand>
</feature>
<feature type="glycosylation site" description="N-linked (GlcNAc...) asparagine" evidence="6">
    <location>
        <position position="37"/>
    </location>
</feature>
<feature type="glycosylation site" description="N-linked (GlcNAc...) asparagine" evidence="6">
    <location>
        <position position="191"/>
    </location>
</feature>
<feature type="disulfide bond" evidence="4">
    <location>
        <begin position="159"/>
        <end position="178"/>
    </location>
</feature>
<protein>
    <recommendedName>
        <fullName evidence="9">Probable pectate lyase 18</fullName>
        <ecNumber evidence="2">4.2.2.2</ecNumber>
    </recommendedName>
    <alternativeName>
        <fullName evidence="8">Style development-specific protein 9612</fullName>
    </alternativeName>
</protein>